<comment type="function">
    <text evidence="1">Transcriptional repressor.</text>
</comment>
<comment type="subunit">
    <text evidence="1">Dimerization is required for DNA-binding.</text>
</comment>
<comment type="subcellular location">
    <subcellularLocation>
        <location evidence="2 7">Nucleus</location>
    </subcellularLocation>
</comment>
<comment type="alternative products">
    <event type="alternative splicing"/>
    <isoform>
        <id>Q4VYS1-1</id>
        <name evidence="5">a</name>
        <sequence type="displayed"/>
    </isoform>
    <isoform>
        <id>Q4VYS1-2</id>
        <name evidence="5">b</name>
        <sequence type="described" ref="VSP_052126 VSP_052127 VSP_052128"/>
    </isoform>
</comment>
<comment type="tissue specificity">
    <text evidence="5">At stage 15, expressed in the anterior/superior eye field and the caudal branchial arch. At later stages, expression persists in the retina and in the caudal branchial arch. Expressed in the pronephros and the tip of the tail. Beginning with stage 35, expression in the brain is localized to distinct subdomains of the anterior prosencephalon, the medial mesencephalon and to lateral domains of the hindbrain.</text>
</comment>
<comment type="developmental stage">
    <text evidence="5">First expressed weakly at mid-gastrula (stage 11) but expression becomes prominent at stage 15.</text>
</comment>
<comment type="domain">
    <text evidence="1">The leucine-zipper is required for dimerization and transcriptional repression.</text>
</comment>
<feature type="chain" id="PRO_0000247655" description="Forkhead box protein P2">
    <location>
        <begin position="1"/>
        <end position="706"/>
    </location>
</feature>
<feature type="zinc finger region" description="C2H2-type" evidence="2">
    <location>
        <begin position="337"/>
        <end position="362"/>
    </location>
</feature>
<feature type="DNA-binding region" description="Fork-head" evidence="3">
    <location>
        <begin position="495"/>
        <end position="585"/>
    </location>
</feature>
<feature type="region of interest" description="Disordered" evidence="4">
    <location>
        <begin position="1"/>
        <end position="45"/>
    </location>
</feature>
<feature type="region of interest" description="Disordered" evidence="4">
    <location>
        <begin position="275"/>
        <end position="305"/>
    </location>
</feature>
<feature type="region of interest" description="Leucine-zipper">
    <location>
        <begin position="379"/>
        <end position="400"/>
    </location>
</feature>
<feature type="region of interest" description="Ctbp1-binding" evidence="1">
    <location>
        <begin position="413"/>
        <end position="417"/>
    </location>
</feature>
<feature type="region of interest" description="Disordered" evidence="4">
    <location>
        <begin position="672"/>
        <end position="706"/>
    </location>
</feature>
<feature type="compositionally biased region" description="Polar residues" evidence="4">
    <location>
        <begin position="1"/>
        <end position="28"/>
    </location>
</feature>
<feature type="compositionally biased region" description="Low complexity" evidence="4">
    <location>
        <begin position="287"/>
        <end position="296"/>
    </location>
</feature>
<feature type="compositionally biased region" description="Acidic residues" evidence="4">
    <location>
        <begin position="690"/>
        <end position="706"/>
    </location>
</feature>
<feature type="splice variant" id="VSP_052126" description="In isoform b." evidence="6">
    <location>
        <begin position="1"/>
        <end position="90"/>
    </location>
</feature>
<feature type="splice variant" id="VSP_052127" description="In isoform b." evidence="6">
    <location>
        <begin position="135"/>
        <end position="154"/>
    </location>
</feature>
<feature type="splice variant" id="VSP_052128" description="In isoform b." evidence="6">
    <original>I</original>
    <variation>ISFKFLVTPLDKRIIPVPCHSTLRLLQCLQR</variation>
    <location>
        <position position="659"/>
    </location>
</feature>
<feature type="sequence conflict" description="In Ref. 1; CAI96564." evidence="7" ref="1">
    <original>A</original>
    <variation>G</variation>
    <location>
        <position position="581"/>
    </location>
</feature>
<dbReference type="EMBL" id="AJ971475">
    <property type="protein sequence ID" value="CAI96563.1"/>
    <property type="molecule type" value="mRNA"/>
</dbReference>
<dbReference type="EMBL" id="AJ971476">
    <property type="protein sequence ID" value="CAI96564.1"/>
    <property type="molecule type" value="mRNA"/>
</dbReference>
<dbReference type="RefSeq" id="NP_001089138.1">
    <molecule id="Q4VYS1-1"/>
    <property type="nucleotide sequence ID" value="NM_001095669.1"/>
</dbReference>
<dbReference type="SMR" id="Q4VYS1"/>
<dbReference type="KEGG" id="xla:734154"/>
<dbReference type="AGR" id="Xenbase:XB-GENE-864899"/>
<dbReference type="CTD" id="734154"/>
<dbReference type="Xenbase" id="XB-GENE-864899">
    <property type="gene designation" value="foxp2.L"/>
</dbReference>
<dbReference type="OrthoDB" id="5830876at2759"/>
<dbReference type="Proteomes" id="UP000186698">
    <property type="component" value="Chromosome 3L"/>
</dbReference>
<dbReference type="Bgee" id="734154">
    <property type="expression patterns" value="Expressed in zone of skin and 9 other cell types or tissues"/>
</dbReference>
<dbReference type="GO" id="GO:0005634">
    <property type="term" value="C:nucleus"/>
    <property type="evidence" value="ECO:0000318"/>
    <property type="project" value="GO_Central"/>
</dbReference>
<dbReference type="GO" id="GO:0003677">
    <property type="term" value="F:DNA binding"/>
    <property type="evidence" value="ECO:0000250"/>
    <property type="project" value="UniProtKB"/>
</dbReference>
<dbReference type="GO" id="GO:0001227">
    <property type="term" value="F:DNA-binding transcription repressor activity, RNA polymerase II-specific"/>
    <property type="evidence" value="ECO:0000318"/>
    <property type="project" value="GO_Central"/>
</dbReference>
<dbReference type="GO" id="GO:0000978">
    <property type="term" value="F:RNA polymerase II cis-regulatory region sequence-specific DNA binding"/>
    <property type="evidence" value="ECO:0000318"/>
    <property type="project" value="GO_Central"/>
</dbReference>
<dbReference type="GO" id="GO:0008270">
    <property type="term" value="F:zinc ion binding"/>
    <property type="evidence" value="ECO:0007669"/>
    <property type="project" value="UniProtKB-KW"/>
</dbReference>
<dbReference type="GO" id="GO:0021757">
    <property type="term" value="P:caudate nucleus development"/>
    <property type="evidence" value="ECO:0000250"/>
    <property type="project" value="UniProtKB"/>
</dbReference>
<dbReference type="GO" id="GO:0045892">
    <property type="term" value="P:negative regulation of DNA-templated transcription"/>
    <property type="evidence" value="ECO:0000250"/>
    <property type="project" value="UniProtKB"/>
</dbReference>
<dbReference type="GO" id="GO:0000122">
    <property type="term" value="P:negative regulation of transcription by RNA polymerase II"/>
    <property type="evidence" value="ECO:0000250"/>
    <property type="project" value="UniProtKB"/>
</dbReference>
<dbReference type="GO" id="GO:0021758">
    <property type="term" value="P:putamen development"/>
    <property type="evidence" value="ECO:0000250"/>
    <property type="project" value="UniProtKB"/>
</dbReference>
<dbReference type="GO" id="GO:0006357">
    <property type="term" value="P:regulation of transcription by RNA polymerase II"/>
    <property type="evidence" value="ECO:0000318"/>
    <property type="project" value="GO_Central"/>
</dbReference>
<dbReference type="CDD" id="cd20065">
    <property type="entry name" value="FH_FOXP2"/>
    <property type="match status" value="1"/>
</dbReference>
<dbReference type="FunFam" id="1.20.5.340:FF:000005">
    <property type="entry name" value="Forkhead box P1, isoform CRA_f"/>
    <property type="match status" value="1"/>
</dbReference>
<dbReference type="FunFam" id="1.10.10.10:FF:000010">
    <property type="entry name" value="Forkhead box P2 isoform B"/>
    <property type="match status" value="1"/>
</dbReference>
<dbReference type="Gene3D" id="1.20.5.340">
    <property type="match status" value="1"/>
</dbReference>
<dbReference type="Gene3D" id="1.10.10.10">
    <property type="entry name" value="Winged helix-like DNA-binding domain superfamily/Winged helix DNA-binding domain"/>
    <property type="match status" value="1"/>
</dbReference>
<dbReference type="InterPro" id="IPR047412">
    <property type="entry name" value="FH_FOXP1_P2"/>
</dbReference>
<dbReference type="InterPro" id="IPR001766">
    <property type="entry name" value="Fork_head_dom"/>
</dbReference>
<dbReference type="InterPro" id="IPR050998">
    <property type="entry name" value="FOXP"/>
</dbReference>
<dbReference type="InterPro" id="IPR032354">
    <property type="entry name" value="FOXP-CC"/>
</dbReference>
<dbReference type="InterPro" id="IPR030456">
    <property type="entry name" value="TF_fork_head_CS_2"/>
</dbReference>
<dbReference type="InterPro" id="IPR036388">
    <property type="entry name" value="WH-like_DNA-bd_sf"/>
</dbReference>
<dbReference type="InterPro" id="IPR036390">
    <property type="entry name" value="WH_DNA-bd_sf"/>
</dbReference>
<dbReference type="PANTHER" id="PTHR45796">
    <property type="entry name" value="FORKHEAD BOX P, ISOFORM C"/>
    <property type="match status" value="1"/>
</dbReference>
<dbReference type="PANTHER" id="PTHR45796:SF1">
    <property type="entry name" value="FORKHEAD BOX PROTEIN P2"/>
    <property type="match status" value="1"/>
</dbReference>
<dbReference type="Pfam" id="PF00250">
    <property type="entry name" value="Forkhead"/>
    <property type="match status" value="1"/>
</dbReference>
<dbReference type="Pfam" id="PF16159">
    <property type="entry name" value="FOXP-CC"/>
    <property type="match status" value="1"/>
</dbReference>
<dbReference type="PRINTS" id="PR00053">
    <property type="entry name" value="FORKHEAD"/>
</dbReference>
<dbReference type="SMART" id="SM00339">
    <property type="entry name" value="FH"/>
    <property type="match status" value="1"/>
</dbReference>
<dbReference type="SUPFAM" id="SSF46785">
    <property type="entry name" value="Winged helix' DNA-binding domain"/>
    <property type="match status" value="1"/>
</dbReference>
<dbReference type="PROSITE" id="PS00658">
    <property type="entry name" value="FORK_HEAD_2"/>
    <property type="match status" value="1"/>
</dbReference>
<dbReference type="PROSITE" id="PS50039">
    <property type="entry name" value="FORK_HEAD_3"/>
    <property type="match status" value="1"/>
</dbReference>
<dbReference type="PROSITE" id="PS00028">
    <property type="entry name" value="ZINC_FINGER_C2H2_1"/>
    <property type="match status" value="1"/>
</dbReference>
<gene>
    <name evidence="6" type="primary">foxp2</name>
</gene>
<sequence>MMQESATETISNSSMNQNGMSTLSSQLDAGSRDGRSSSDTSSEVSTVELLHLQQQQALQAARQLLLQQQTSGLKSPKNNEKQRPLQVPVSMAMMTPQVITPQQMQQILQQQVLSPQQLQALLQQQQAVMLQQQQLQEFYKKQQEQLHLQLLQQQQQQQQQQQQQQQQQQQQQQQQQQQQQQQQQQQPQPHPGKQAKEQQQLAAQQLVFQQQLLQMQQLQQQQHLLNLQRQGLISIPPSQSALPVQSLPQAGLSPAEIQQLWKEVTGVHSMEDNGIKHGGLDLTTNISSSTTSTTTSKASPPITHHSLLNGQASVLSARRDSSSHEETGASHTLYGHGVCKWPGCENICEDFGQFLKHLNNEHALDDRSTAQCRVQMQVVQQLEIQLSKERERLQAMMTHLHMRPSEPKPSPKPLNLVSTVTMSKNMLETSPQSLPQTPTTPTAPVTPLAQGPSVITPASVPNVGAIRRRHSDKYNIPMSSEIAPNYEFYKNADVRPPFTYATLIRQAIMESSDRQLTLNEIYSWFTRTFAYFRRNAATWKNAVRHNLSLHKCFVRVENVKGAVWTVDEAEYQKRRSQKITASPTLVKNIPTSLGYGAALNASLQAALAESSLPLLSNTGLLNNASTGLLQAVHEDLNGSLDHIDSNGNSSAGCSPQPHIHSIHVKEEPLIADDEDCPMSLVTTANHSPELEEDRELEEEPLSEDLE</sequence>
<keyword id="KW-0025">Alternative splicing</keyword>
<keyword id="KW-0238">DNA-binding</keyword>
<keyword id="KW-0479">Metal-binding</keyword>
<keyword id="KW-0539">Nucleus</keyword>
<keyword id="KW-1185">Reference proteome</keyword>
<keyword id="KW-0678">Repressor</keyword>
<keyword id="KW-0804">Transcription</keyword>
<keyword id="KW-0805">Transcription regulation</keyword>
<keyword id="KW-0862">Zinc</keyword>
<keyword id="KW-0863">Zinc-finger</keyword>
<evidence type="ECO:0000250" key="1">
    <source>
        <dbReference type="UniProtKB" id="P58463"/>
    </source>
</evidence>
<evidence type="ECO:0000255" key="2"/>
<evidence type="ECO:0000255" key="3">
    <source>
        <dbReference type="PROSITE-ProRule" id="PRU00089"/>
    </source>
</evidence>
<evidence type="ECO:0000256" key="4">
    <source>
        <dbReference type="SAM" id="MobiDB-lite"/>
    </source>
</evidence>
<evidence type="ECO:0000269" key="5">
    <source>
    </source>
</evidence>
<evidence type="ECO:0000303" key="6">
    <source>
    </source>
</evidence>
<evidence type="ECO:0000305" key="7"/>
<evidence type="ECO:0000312" key="8">
    <source>
        <dbReference type="EMBL" id="CAI96563.1"/>
    </source>
</evidence>
<reference evidence="7 8" key="1">
    <citation type="journal article" date="2006" name="Dev. Genes Evol.">
        <title>The FoxP subclass in Xenopus laevis development.</title>
        <authorList>
            <person name="Schoen C."/>
            <person name="Wochnik A."/>
            <person name="Roessner A."/>
            <person name="Donow C."/>
            <person name="Knoechel W."/>
        </authorList>
    </citation>
    <scope>NUCLEOTIDE SEQUENCE [MRNA] (ISOFORMS A AND B)</scope>
    <scope>TISSUE SPECIFICITY</scope>
    <scope>DEVELOPMENTAL STAGE</scope>
    <source>
        <tissue evidence="5">Tadpole</tissue>
    </source>
</reference>
<proteinExistence type="evidence at transcript level"/>
<organism>
    <name type="scientific">Xenopus laevis</name>
    <name type="common">African clawed frog</name>
    <dbReference type="NCBI Taxonomy" id="8355"/>
    <lineage>
        <taxon>Eukaryota</taxon>
        <taxon>Metazoa</taxon>
        <taxon>Chordata</taxon>
        <taxon>Craniata</taxon>
        <taxon>Vertebrata</taxon>
        <taxon>Euteleostomi</taxon>
        <taxon>Amphibia</taxon>
        <taxon>Batrachia</taxon>
        <taxon>Anura</taxon>
        <taxon>Pipoidea</taxon>
        <taxon>Pipidae</taxon>
        <taxon>Xenopodinae</taxon>
        <taxon>Xenopus</taxon>
        <taxon>Xenopus</taxon>
    </lineage>
</organism>
<name>FOXP2_XENLA</name>
<protein>
    <recommendedName>
        <fullName>Forkhead box protein P2</fullName>
    </recommendedName>
    <alternativeName>
        <fullName>XlFoxP2</fullName>
    </alternativeName>
</protein>
<accession>Q4VYS1</accession>
<accession>Q4VYS0</accession>